<feature type="signal peptide" evidence="2">
    <location>
        <begin position="1"/>
        <end position="18"/>
    </location>
</feature>
<feature type="propeptide" id="PRO_0000393637" evidence="2">
    <location>
        <begin position="19"/>
        <end position="31"/>
    </location>
</feature>
<feature type="chain" id="PRO_0000393638" description="Probable endopolygalacturonase A">
    <location>
        <begin position="32"/>
        <end position="368"/>
    </location>
</feature>
<feature type="repeat" description="PbH1 1">
    <location>
        <begin position="140"/>
        <end position="162"/>
    </location>
</feature>
<feature type="repeat" description="PbH1 2">
    <location>
        <begin position="167"/>
        <end position="192"/>
    </location>
</feature>
<feature type="repeat" description="PbH1 3">
    <location>
        <begin position="193"/>
        <end position="214"/>
    </location>
</feature>
<feature type="repeat" description="PbH1 4">
    <location>
        <begin position="215"/>
        <end position="235"/>
    </location>
</feature>
<feature type="repeat" description="PbH1 5">
    <location>
        <begin position="244"/>
        <end position="265"/>
    </location>
</feature>
<feature type="repeat" description="PbH1 6">
    <location>
        <begin position="273"/>
        <end position="295"/>
    </location>
</feature>
<feature type="repeat" description="PbH1 7">
    <location>
        <begin position="307"/>
        <end position="352"/>
    </location>
</feature>
<feature type="active site" description="Proton donor" evidence="3">
    <location>
        <position position="207"/>
    </location>
</feature>
<feature type="active site" evidence="3">
    <location>
        <position position="229"/>
    </location>
</feature>
<feature type="glycosylation site" description="N-linked (GlcNAc...) asparagine" evidence="2">
    <location>
        <position position="246"/>
    </location>
</feature>
<feature type="disulfide bond" evidence="1">
    <location>
        <begin position="35"/>
        <end position="50"/>
    </location>
</feature>
<feature type="disulfide bond" evidence="1">
    <location>
        <begin position="209"/>
        <end position="225"/>
    </location>
</feature>
<feature type="disulfide bond" evidence="1">
    <location>
        <begin position="335"/>
        <end position="340"/>
    </location>
</feature>
<feature type="disulfide bond" evidence="1">
    <location>
        <begin position="359"/>
        <end position="368"/>
    </location>
</feature>
<keyword id="KW-0961">Cell wall biogenesis/degradation</keyword>
<keyword id="KW-1015">Disulfide bond</keyword>
<keyword id="KW-0325">Glycoprotein</keyword>
<keyword id="KW-0326">Glycosidase</keyword>
<keyword id="KW-0378">Hydrolase</keyword>
<keyword id="KW-1185">Reference proteome</keyword>
<keyword id="KW-0677">Repeat</keyword>
<keyword id="KW-0964">Secreted</keyword>
<keyword id="KW-0732">Signal</keyword>
<keyword id="KW-0865">Zymogen</keyword>
<sequence length="368" mass="38110">MRSVKLFGLAALGSLGAAAPAPSRVSDLTKRSSTCTFTAASQATESASGCSEIVLDNIEVPAGETLDLSDVDDGTTIVFEGTTTFGYKEWSGPLIRFGGKDITIKQNSGAVIDGEGSRWWDGEGTNGGKTKPKFMYAHSLEDSTITGLSIKNTPVQAISVQATNLYLIDITIDNSDGDDNGGHNTDGFDISESTGVYIRGATVKNQDDCIAINSGENIEFSGGTCSGGHGLSIGSVGGRDDNTVKNVTITDSTVTDSANGVRIKTVYDATGSVSQVTYSNIKLSGITDYGIVIEQDYENGSPTGTPTTGVPITDLTIDGVTGTVESDAVEVYILCGDGSCSDWTWEGVDITGGEKSSKCENVPSGASC</sequence>
<accession>Q4WQT2</accession>
<proteinExistence type="inferred from homology"/>
<reference key="1">
    <citation type="journal article" date="2005" name="Nature">
        <title>Genomic sequence of the pathogenic and allergenic filamentous fungus Aspergillus fumigatus.</title>
        <authorList>
            <person name="Nierman W.C."/>
            <person name="Pain A."/>
            <person name="Anderson M.J."/>
            <person name="Wortman J.R."/>
            <person name="Kim H.S."/>
            <person name="Arroyo J."/>
            <person name="Berriman M."/>
            <person name="Abe K."/>
            <person name="Archer D.B."/>
            <person name="Bermejo C."/>
            <person name="Bennett J.W."/>
            <person name="Bowyer P."/>
            <person name="Chen D."/>
            <person name="Collins M."/>
            <person name="Coulsen R."/>
            <person name="Davies R."/>
            <person name="Dyer P.S."/>
            <person name="Farman M.L."/>
            <person name="Fedorova N."/>
            <person name="Fedorova N.D."/>
            <person name="Feldblyum T.V."/>
            <person name="Fischer R."/>
            <person name="Fosker N."/>
            <person name="Fraser A."/>
            <person name="Garcia J.L."/>
            <person name="Garcia M.J."/>
            <person name="Goble A."/>
            <person name="Goldman G.H."/>
            <person name="Gomi K."/>
            <person name="Griffith-Jones S."/>
            <person name="Gwilliam R."/>
            <person name="Haas B.J."/>
            <person name="Haas H."/>
            <person name="Harris D.E."/>
            <person name="Horiuchi H."/>
            <person name="Huang J."/>
            <person name="Humphray S."/>
            <person name="Jimenez J."/>
            <person name="Keller N."/>
            <person name="Khouri H."/>
            <person name="Kitamoto K."/>
            <person name="Kobayashi T."/>
            <person name="Konzack S."/>
            <person name="Kulkarni R."/>
            <person name="Kumagai T."/>
            <person name="Lafton A."/>
            <person name="Latge J.-P."/>
            <person name="Li W."/>
            <person name="Lord A."/>
            <person name="Lu C."/>
            <person name="Majoros W.H."/>
            <person name="May G.S."/>
            <person name="Miller B.L."/>
            <person name="Mohamoud Y."/>
            <person name="Molina M."/>
            <person name="Monod M."/>
            <person name="Mouyna I."/>
            <person name="Mulligan S."/>
            <person name="Murphy L.D."/>
            <person name="O'Neil S."/>
            <person name="Paulsen I."/>
            <person name="Penalva M.A."/>
            <person name="Pertea M."/>
            <person name="Price C."/>
            <person name="Pritchard B.L."/>
            <person name="Quail M.A."/>
            <person name="Rabbinowitsch E."/>
            <person name="Rawlins N."/>
            <person name="Rajandream M.A."/>
            <person name="Reichard U."/>
            <person name="Renauld H."/>
            <person name="Robson G.D."/>
            <person name="Rodriguez de Cordoba S."/>
            <person name="Rodriguez-Pena J.M."/>
            <person name="Ronning C.M."/>
            <person name="Rutter S."/>
            <person name="Salzberg S.L."/>
            <person name="Sanchez M."/>
            <person name="Sanchez-Ferrero J.C."/>
            <person name="Saunders D."/>
            <person name="Seeger K."/>
            <person name="Squares R."/>
            <person name="Squares S."/>
            <person name="Takeuchi M."/>
            <person name="Tekaia F."/>
            <person name="Turner G."/>
            <person name="Vazquez de Aldana C.R."/>
            <person name="Weidman J."/>
            <person name="White O."/>
            <person name="Woodward J.R."/>
            <person name="Yu J.-H."/>
            <person name="Fraser C.M."/>
            <person name="Galagan J.E."/>
            <person name="Asai K."/>
            <person name="Machida M."/>
            <person name="Hall N."/>
            <person name="Barrell B.G."/>
            <person name="Denning D.W."/>
        </authorList>
    </citation>
    <scope>NUCLEOTIDE SEQUENCE [LARGE SCALE GENOMIC DNA]</scope>
    <source>
        <strain>ATCC MYA-4609 / CBS 101355 / FGSC A1100 / Af293</strain>
    </source>
</reference>
<evidence type="ECO:0000250" key="1"/>
<evidence type="ECO:0000255" key="2"/>
<evidence type="ECO:0000255" key="3">
    <source>
        <dbReference type="PROSITE-ProRule" id="PRU10052"/>
    </source>
</evidence>
<evidence type="ECO:0000305" key="4"/>
<organism>
    <name type="scientific">Aspergillus fumigatus (strain ATCC MYA-4609 / CBS 101355 / FGSC A1100 / Af293)</name>
    <name type="common">Neosartorya fumigata</name>
    <dbReference type="NCBI Taxonomy" id="330879"/>
    <lineage>
        <taxon>Eukaryota</taxon>
        <taxon>Fungi</taxon>
        <taxon>Dikarya</taxon>
        <taxon>Ascomycota</taxon>
        <taxon>Pezizomycotina</taxon>
        <taxon>Eurotiomycetes</taxon>
        <taxon>Eurotiomycetidae</taxon>
        <taxon>Eurotiales</taxon>
        <taxon>Aspergillaceae</taxon>
        <taxon>Aspergillus</taxon>
        <taxon>Aspergillus subgen. Fumigati</taxon>
    </lineage>
</organism>
<name>PGLRA_ASPFU</name>
<comment type="function">
    <text evidence="1">Involved in maceration and soft-rotting of plant tissue. Hydrolyzes the 1,4-alpha glycosidic bonds of de-esterified pectate in the smooth region of the plant cell wall (By similarity).</text>
</comment>
<comment type="catalytic activity">
    <reaction>
        <text>(1,4-alpha-D-galacturonosyl)n+m + H2O = (1,4-alpha-D-galacturonosyl)n + (1,4-alpha-D-galacturonosyl)m.</text>
        <dbReference type="EC" id="3.2.1.15"/>
    </reaction>
</comment>
<comment type="subcellular location">
    <subcellularLocation>
        <location evidence="1">Secreted</location>
    </subcellularLocation>
</comment>
<comment type="similarity">
    <text evidence="4">Belongs to the glycosyl hydrolase 28 family.</text>
</comment>
<gene>
    <name type="primary">pgaA</name>
    <name type="synonym">pecA</name>
    <name type="ORF">AFUA_4G13920</name>
</gene>
<dbReference type="EC" id="3.2.1.15"/>
<dbReference type="EMBL" id="AAHF01000005">
    <property type="protein sequence ID" value="EAL89402.1"/>
    <property type="molecule type" value="Genomic_DNA"/>
</dbReference>
<dbReference type="RefSeq" id="XP_751440.1">
    <property type="nucleotide sequence ID" value="XM_746347.1"/>
</dbReference>
<dbReference type="SMR" id="Q4WQT2"/>
<dbReference type="FunCoup" id="Q4WQT2">
    <property type="interactions" value="127"/>
</dbReference>
<dbReference type="STRING" id="330879.Q4WQT2"/>
<dbReference type="GlyCosmos" id="Q4WQT2">
    <property type="glycosylation" value="1 site, No reported glycans"/>
</dbReference>
<dbReference type="EnsemblFungi" id="EAL89402">
    <property type="protein sequence ID" value="EAL89402"/>
    <property type="gene ID" value="AFUA_4G13920"/>
</dbReference>
<dbReference type="GeneID" id="3509371"/>
<dbReference type="KEGG" id="afm:AFUA_4G13920"/>
<dbReference type="VEuPathDB" id="FungiDB:Afu4g13920"/>
<dbReference type="eggNOG" id="ENOG502QST2">
    <property type="taxonomic scope" value="Eukaryota"/>
</dbReference>
<dbReference type="HOGENOM" id="CLU_040116_0_0_1"/>
<dbReference type="InParanoid" id="Q4WQT2"/>
<dbReference type="OMA" id="WVNNLVV"/>
<dbReference type="OrthoDB" id="1546079at2759"/>
<dbReference type="Proteomes" id="UP000002530">
    <property type="component" value="Chromosome 4"/>
</dbReference>
<dbReference type="GO" id="GO:0005576">
    <property type="term" value="C:extracellular region"/>
    <property type="evidence" value="ECO:0000250"/>
    <property type="project" value="UniProtKB"/>
</dbReference>
<dbReference type="GO" id="GO:0004650">
    <property type="term" value="F:polygalacturonase activity"/>
    <property type="evidence" value="ECO:0000250"/>
    <property type="project" value="UniProtKB"/>
</dbReference>
<dbReference type="GO" id="GO:0071555">
    <property type="term" value="P:cell wall organization"/>
    <property type="evidence" value="ECO:0007669"/>
    <property type="project" value="UniProtKB-KW"/>
</dbReference>
<dbReference type="GO" id="GO:0045490">
    <property type="term" value="P:pectin catabolic process"/>
    <property type="evidence" value="ECO:0000250"/>
    <property type="project" value="UniProtKB"/>
</dbReference>
<dbReference type="FunFam" id="2.160.20.10:FF:000002">
    <property type="entry name" value="Endopolygalacturonase D"/>
    <property type="match status" value="1"/>
</dbReference>
<dbReference type="Gene3D" id="2.160.20.10">
    <property type="entry name" value="Single-stranded right-handed beta-helix, Pectin lyase-like"/>
    <property type="match status" value="1"/>
</dbReference>
<dbReference type="InterPro" id="IPR000743">
    <property type="entry name" value="Glyco_hydro_28"/>
</dbReference>
<dbReference type="InterPro" id="IPR050434">
    <property type="entry name" value="Glycosyl_hydrlase_28"/>
</dbReference>
<dbReference type="InterPro" id="IPR006626">
    <property type="entry name" value="PbH1"/>
</dbReference>
<dbReference type="InterPro" id="IPR012334">
    <property type="entry name" value="Pectin_lyas_fold"/>
</dbReference>
<dbReference type="InterPro" id="IPR011050">
    <property type="entry name" value="Pectin_lyase_fold/virulence"/>
</dbReference>
<dbReference type="PANTHER" id="PTHR31884:SF13">
    <property type="entry name" value="ENDOPOLYGALACTURONASE B"/>
    <property type="match status" value="1"/>
</dbReference>
<dbReference type="PANTHER" id="PTHR31884">
    <property type="entry name" value="POLYGALACTURONASE"/>
    <property type="match status" value="1"/>
</dbReference>
<dbReference type="Pfam" id="PF00295">
    <property type="entry name" value="Glyco_hydro_28"/>
    <property type="match status" value="1"/>
</dbReference>
<dbReference type="SMART" id="SM00710">
    <property type="entry name" value="PbH1"/>
    <property type="match status" value="7"/>
</dbReference>
<dbReference type="SUPFAM" id="SSF51126">
    <property type="entry name" value="Pectin lyase-like"/>
    <property type="match status" value="1"/>
</dbReference>
<dbReference type="PROSITE" id="PS00502">
    <property type="entry name" value="POLYGALACTURONASE"/>
    <property type="match status" value="1"/>
</dbReference>
<protein>
    <recommendedName>
        <fullName>Probable endopolygalacturonase A</fullName>
        <ecNumber>3.2.1.15</ecNumber>
    </recommendedName>
    <alternativeName>
        <fullName>Pectinase A</fullName>
    </alternativeName>
    <alternativeName>
        <fullName>Polygalacturonase A</fullName>
    </alternativeName>
</protein>